<evidence type="ECO:0000250" key="1">
    <source>
        <dbReference type="UniProtKB" id="P62263"/>
    </source>
</evidence>
<evidence type="ECO:0000256" key="2">
    <source>
        <dbReference type="SAM" id="MobiDB-lite"/>
    </source>
</evidence>
<evidence type="ECO:0000305" key="3"/>
<comment type="function">
    <text evidence="1">Component of the small ribosomal subunit. The ribosome is a large ribonucleoprotein complex responsible for the synthesis of proteins in the cell. Part of the small subunit (SSU) processome, first precursor of the small eukaryotic ribosomal subunit. During the assembly of the SSU processome in the nucleolus, many ribosome biogenesis factors, an RNA chaperone and ribosomal proteins associate with the nascent pre-rRNA and work in concert to generate RNA folding, modifications, rearrangements and cleavage as well as targeted degradation of pre-ribosomal RNA by the RNA exosome.</text>
</comment>
<comment type="subunit">
    <text evidence="1">Component of the small ribosomal subunit. Part of the small subunit (SSU) processome, composed of more than 70 proteins and the RNA chaperone small nucleolar RNA (snoRNA) U3.</text>
</comment>
<comment type="subcellular location">
    <subcellularLocation>
        <location evidence="1">Cytoplasm</location>
    </subcellularLocation>
    <subcellularLocation>
        <location evidence="1">Nucleus</location>
        <location evidence="1">Nucleolus</location>
    </subcellularLocation>
</comment>
<comment type="similarity">
    <text evidence="3">Belongs to the universal ribosomal protein uS11 family.</text>
</comment>
<reference key="1">
    <citation type="journal article" date="2005" name="Nature">
        <title>The genome of the social amoeba Dictyostelium discoideum.</title>
        <authorList>
            <person name="Eichinger L."/>
            <person name="Pachebat J.A."/>
            <person name="Gloeckner G."/>
            <person name="Rajandream M.A."/>
            <person name="Sucgang R."/>
            <person name="Berriman M."/>
            <person name="Song J."/>
            <person name="Olsen R."/>
            <person name="Szafranski K."/>
            <person name="Xu Q."/>
            <person name="Tunggal B."/>
            <person name="Kummerfeld S."/>
            <person name="Madera M."/>
            <person name="Konfortov B.A."/>
            <person name="Rivero F."/>
            <person name="Bankier A.T."/>
            <person name="Lehmann R."/>
            <person name="Hamlin N."/>
            <person name="Davies R."/>
            <person name="Gaudet P."/>
            <person name="Fey P."/>
            <person name="Pilcher K."/>
            <person name="Chen G."/>
            <person name="Saunders D."/>
            <person name="Sodergren E.J."/>
            <person name="Davis P."/>
            <person name="Kerhornou A."/>
            <person name="Nie X."/>
            <person name="Hall N."/>
            <person name="Anjard C."/>
            <person name="Hemphill L."/>
            <person name="Bason N."/>
            <person name="Farbrother P."/>
            <person name="Desany B."/>
            <person name="Just E."/>
            <person name="Morio T."/>
            <person name="Rost R."/>
            <person name="Churcher C.M."/>
            <person name="Cooper J."/>
            <person name="Haydock S."/>
            <person name="van Driessche N."/>
            <person name="Cronin A."/>
            <person name="Goodhead I."/>
            <person name="Muzny D.M."/>
            <person name="Mourier T."/>
            <person name="Pain A."/>
            <person name="Lu M."/>
            <person name="Harper D."/>
            <person name="Lindsay R."/>
            <person name="Hauser H."/>
            <person name="James K.D."/>
            <person name="Quiles M."/>
            <person name="Madan Babu M."/>
            <person name="Saito T."/>
            <person name="Buchrieser C."/>
            <person name="Wardroper A."/>
            <person name="Felder M."/>
            <person name="Thangavelu M."/>
            <person name="Johnson D."/>
            <person name="Knights A."/>
            <person name="Loulseged H."/>
            <person name="Mungall K.L."/>
            <person name="Oliver K."/>
            <person name="Price C."/>
            <person name="Quail M.A."/>
            <person name="Urushihara H."/>
            <person name="Hernandez J."/>
            <person name="Rabbinowitsch E."/>
            <person name="Steffen D."/>
            <person name="Sanders M."/>
            <person name="Ma J."/>
            <person name="Kohara Y."/>
            <person name="Sharp S."/>
            <person name="Simmonds M.N."/>
            <person name="Spiegler S."/>
            <person name="Tivey A."/>
            <person name="Sugano S."/>
            <person name="White B."/>
            <person name="Walker D."/>
            <person name="Woodward J.R."/>
            <person name="Winckler T."/>
            <person name="Tanaka Y."/>
            <person name="Shaulsky G."/>
            <person name="Schleicher M."/>
            <person name="Weinstock G.M."/>
            <person name="Rosenthal A."/>
            <person name="Cox E.C."/>
            <person name="Chisholm R.L."/>
            <person name="Gibbs R.A."/>
            <person name="Loomis W.F."/>
            <person name="Platzer M."/>
            <person name="Kay R.R."/>
            <person name="Williams J.G."/>
            <person name="Dear P.H."/>
            <person name="Noegel A.A."/>
            <person name="Barrell B.G."/>
            <person name="Kuspa A."/>
        </authorList>
    </citation>
    <scope>NUCLEOTIDE SEQUENCE [LARGE SCALE GENOMIC DNA]</scope>
    <source>
        <strain>AX4</strain>
    </source>
</reference>
<name>RS14_DICDI</name>
<gene>
    <name type="primary">rps14</name>
    <name type="ORF">DDB_G0291526</name>
</gene>
<sequence>MSGKKEVKAPKVVEALSAKIPCGPSELVFGVAHIFASFNDTFVHVTDLSSKETIVRVTGGMKVKTDRDESSPYAATMAAQDVALRCKELGVTALHIKLRATGGNGSKTPGPGAQSALRALARSGMRIGRIEDVTPIPTDSTRRKSGHRGRRL</sequence>
<feature type="chain" id="PRO_0000320060" description="Small ribosomal subunit protein uS11">
    <location>
        <begin position="1"/>
        <end position="152"/>
    </location>
</feature>
<feature type="region of interest" description="Disordered" evidence="2">
    <location>
        <begin position="133"/>
        <end position="152"/>
    </location>
</feature>
<feature type="compositionally biased region" description="Basic residues" evidence="2">
    <location>
        <begin position="143"/>
        <end position="152"/>
    </location>
</feature>
<dbReference type="EMBL" id="AAFI02000177">
    <property type="protein sequence ID" value="EAL61747.1"/>
    <property type="molecule type" value="Genomic_DNA"/>
</dbReference>
<dbReference type="RefSeq" id="XP_635277.1">
    <property type="nucleotide sequence ID" value="XM_630185.1"/>
</dbReference>
<dbReference type="SMR" id="Q54EG3"/>
<dbReference type="FunCoup" id="Q54EG3">
    <property type="interactions" value="449"/>
</dbReference>
<dbReference type="STRING" id="44689.Q54EG3"/>
<dbReference type="PaxDb" id="44689-DDB0230056"/>
<dbReference type="EnsemblProtists" id="EAL61747">
    <property type="protein sequence ID" value="EAL61747"/>
    <property type="gene ID" value="DDB_G0291526"/>
</dbReference>
<dbReference type="GeneID" id="8628221"/>
<dbReference type="KEGG" id="ddi:DDB_G0291526"/>
<dbReference type="dictyBase" id="DDB_G0291526">
    <property type="gene designation" value="rps14"/>
</dbReference>
<dbReference type="VEuPathDB" id="AmoebaDB:DDB_G0291526"/>
<dbReference type="eggNOG" id="KOG0407">
    <property type="taxonomic scope" value="Eukaryota"/>
</dbReference>
<dbReference type="HOGENOM" id="CLU_072439_6_0_1"/>
<dbReference type="InParanoid" id="Q54EG3"/>
<dbReference type="OMA" id="KWGVAHI"/>
<dbReference type="PhylomeDB" id="Q54EG3"/>
<dbReference type="Reactome" id="R-DDI-156827">
    <property type="pathway name" value="L13a-mediated translational silencing of Ceruloplasmin expression"/>
</dbReference>
<dbReference type="Reactome" id="R-DDI-1799339">
    <property type="pathway name" value="SRP-dependent cotranslational protein targeting to membrane"/>
</dbReference>
<dbReference type="Reactome" id="R-DDI-6791226">
    <property type="pathway name" value="Major pathway of rRNA processing in the nucleolus and cytosol"/>
</dbReference>
<dbReference type="Reactome" id="R-DDI-72689">
    <property type="pathway name" value="Formation of a pool of free 40S subunits"/>
</dbReference>
<dbReference type="Reactome" id="R-DDI-72695">
    <property type="pathway name" value="Formation of the ternary complex, and subsequently, the 43S complex"/>
</dbReference>
<dbReference type="Reactome" id="R-DDI-72702">
    <property type="pathway name" value="Ribosomal scanning and start codon recognition"/>
</dbReference>
<dbReference type="Reactome" id="R-DDI-72706">
    <property type="pathway name" value="GTP hydrolysis and joining of the 60S ribosomal subunit"/>
</dbReference>
<dbReference type="Reactome" id="R-DDI-975956">
    <property type="pathway name" value="Nonsense Mediated Decay (NMD) independent of the Exon Junction Complex (EJC)"/>
</dbReference>
<dbReference type="Reactome" id="R-DDI-975957">
    <property type="pathway name" value="Nonsense Mediated Decay (NMD) enhanced by the Exon Junction Complex (EJC)"/>
</dbReference>
<dbReference type="PRO" id="PR:Q54EG3"/>
<dbReference type="Proteomes" id="UP000002195">
    <property type="component" value="Chromosome 6"/>
</dbReference>
<dbReference type="GO" id="GO:0022627">
    <property type="term" value="C:cytosolic small ribosomal subunit"/>
    <property type="evidence" value="ECO:0000318"/>
    <property type="project" value="GO_Central"/>
</dbReference>
<dbReference type="GO" id="GO:0031012">
    <property type="term" value="C:extracellular matrix"/>
    <property type="evidence" value="ECO:0007005"/>
    <property type="project" value="dictyBase"/>
</dbReference>
<dbReference type="GO" id="GO:0005730">
    <property type="term" value="C:nucleolus"/>
    <property type="evidence" value="ECO:0007669"/>
    <property type="project" value="UniProtKB-SubCell"/>
</dbReference>
<dbReference type="GO" id="GO:0032040">
    <property type="term" value="C:small-subunit processome"/>
    <property type="evidence" value="ECO:0000250"/>
    <property type="project" value="UniProtKB"/>
</dbReference>
<dbReference type="GO" id="GO:0003723">
    <property type="term" value="F:RNA binding"/>
    <property type="evidence" value="ECO:0000250"/>
    <property type="project" value="dictyBase"/>
</dbReference>
<dbReference type="GO" id="GO:0003735">
    <property type="term" value="F:structural constituent of ribosome"/>
    <property type="evidence" value="ECO:0000318"/>
    <property type="project" value="GO_Central"/>
</dbReference>
<dbReference type="GO" id="GO:0000028">
    <property type="term" value="P:ribosomal small subunit assembly"/>
    <property type="evidence" value="ECO:0000318"/>
    <property type="project" value="GO_Central"/>
</dbReference>
<dbReference type="GO" id="GO:0042274">
    <property type="term" value="P:ribosomal small subunit biogenesis"/>
    <property type="evidence" value="ECO:0000250"/>
    <property type="project" value="UniProtKB"/>
</dbReference>
<dbReference type="GO" id="GO:0006412">
    <property type="term" value="P:translation"/>
    <property type="evidence" value="ECO:0000318"/>
    <property type="project" value="GO_Central"/>
</dbReference>
<dbReference type="FunFam" id="3.30.420.80:FF:000002">
    <property type="entry name" value="40S ribosomal protein S14"/>
    <property type="match status" value="1"/>
</dbReference>
<dbReference type="Gene3D" id="3.30.420.80">
    <property type="entry name" value="Ribosomal protein S11"/>
    <property type="match status" value="1"/>
</dbReference>
<dbReference type="HAMAP" id="MF_01310">
    <property type="entry name" value="Ribosomal_uS11"/>
    <property type="match status" value="1"/>
</dbReference>
<dbReference type="InterPro" id="IPR001971">
    <property type="entry name" value="Ribosomal_uS11"/>
</dbReference>
<dbReference type="InterPro" id="IPR018102">
    <property type="entry name" value="Ribosomal_uS11_CS"/>
</dbReference>
<dbReference type="InterPro" id="IPR036967">
    <property type="entry name" value="Ribosomal_uS11_sf"/>
</dbReference>
<dbReference type="NCBIfam" id="NF007176">
    <property type="entry name" value="PRK09607.1"/>
    <property type="match status" value="1"/>
</dbReference>
<dbReference type="PANTHER" id="PTHR11759">
    <property type="entry name" value="40S RIBOSOMAL PROTEIN S14/30S RIBOSOMAL PROTEIN S11"/>
    <property type="match status" value="1"/>
</dbReference>
<dbReference type="Pfam" id="PF00411">
    <property type="entry name" value="Ribosomal_S11"/>
    <property type="match status" value="1"/>
</dbReference>
<dbReference type="SUPFAM" id="SSF53137">
    <property type="entry name" value="Translational machinery components"/>
    <property type="match status" value="1"/>
</dbReference>
<dbReference type="PROSITE" id="PS00054">
    <property type="entry name" value="RIBOSOMAL_S11"/>
    <property type="match status" value="1"/>
</dbReference>
<accession>Q54EG3</accession>
<keyword id="KW-0963">Cytoplasm</keyword>
<keyword id="KW-0539">Nucleus</keyword>
<keyword id="KW-1185">Reference proteome</keyword>
<keyword id="KW-0687">Ribonucleoprotein</keyword>
<keyword id="KW-0689">Ribosomal protein</keyword>
<organism>
    <name type="scientific">Dictyostelium discoideum</name>
    <name type="common">Social amoeba</name>
    <dbReference type="NCBI Taxonomy" id="44689"/>
    <lineage>
        <taxon>Eukaryota</taxon>
        <taxon>Amoebozoa</taxon>
        <taxon>Evosea</taxon>
        <taxon>Eumycetozoa</taxon>
        <taxon>Dictyostelia</taxon>
        <taxon>Dictyosteliales</taxon>
        <taxon>Dictyosteliaceae</taxon>
        <taxon>Dictyostelium</taxon>
    </lineage>
</organism>
<proteinExistence type="inferred from homology"/>
<protein>
    <recommendedName>
        <fullName evidence="3">Small ribosomal subunit protein uS11</fullName>
    </recommendedName>
    <alternativeName>
        <fullName>40S ribosomal protein S14</fullName>
    </alternativeName>
</protein>